<sequence length="12" mass="1494">GRREDDYDNLQL</sequence>
<evidence type="ECO:0000269" key="1">
    <source>
    </source>
</evidence>
<evidence type="ECO:0000303" key="2">
    <source>
    </source>
</evidence>
<evidence type="ECO:0000305" key="3"/>
<reference evidence="3" key="1">
    <citation type="journal article" date="2012" name="Immunobiology">
        <title>Isolation and characterization of a 28kDa major allergen from blackgram (Phaseolus mungo).</title>
        <authorList>
            <person name="Kumari D."/>
            <person name="Arora N."/>
            <person name="Kasera R."/>
            <person name="Sridhara S."/>
            <person name="Kumar R."/>
            <person name="Singh B.P."/>
        </authorList>
    </citation>
    <scope>PROTEIN SEQUENCE</scope>
    <scope>GLYCOSYLATION</scope>
    <scope>ALLERGEN</scope>
    <source>
        <tissue evidence="1">Seed</tissue>
    </source>
</reference>
<organism>
    <name type="scientific">Vigna mungo</name>
    <name type="common">Black gram</name>
    <name type="synonym">Phaseolus mungo</name>
    <dbReference type="NCBI Taxonomy" id="3915"/>
    <lineage>
        <taxon>Eukaryota</taxon>
        <taxon>Viridiplantae</taxon>
        <taxon>Streptophyta</taxon>
        <taxon>Embryophyta</taxon>
        <taxon>Tracheophyta</taxon>
        <taxon>Spermatophyta</taxon>
        <taxon>Magnoliopsida</taxon>
        <taxon>eudicotyledons</taxon>
        <taxon>Gunneridae</taxon>
        <taxon>Pentapetalae</taxon>
        <taxon>rosids</taxon>
        <taxon>fabids</taxon>
        <taxon>Fabales</taxon>
        <taxon>Fabaceae</taxon>
        <taxon>Papilionoideae</taxon>
        <taxon>50 kb inversion clade</taxon>
        <taxon>NPAAA clade</taxon>
        <taxon>indigoferoid/millettioid clade</taxon>
        <taxon>Phaseoleae</taxon>
        <taxon>Vigna</taxon>
    </lineage>
</organism>
<proteinExistence type="evidence at protein level"/>
<name>ALL28_VIGMU</name>
<comment type="PTM">
    <text evidence="1">Glycosylated.</text>
</comment>
<comment type="allergen">
    <text evidence="1">Causes an allergic reaction in human. Binds to IgE.</text>
</comment>
<keyword id="KW-0020">Allergen</keyword>
<keyword id="KW-0903">Direct protein sequencing</keyword>
<accession>P86898</accession>
<protein>
    <recommendedName>
        <fullName evidence="2">Major 28 kDa allergen</fullName>
    </recommendedName>
    <allergenName>Vig m 28kD</allergenName>
</protein>
<feature type="chain" id="PRO_0000419962" description="Major 28 kDa allergen">
    <location>
        <begin position="1"/>
        <end position="12" status="greater than"/>
    </location>
</feature>
<feature type="non-terminal residue" evidence="2">
    <location>
        <position position="12"/>
    </location>
</feature>
<dbReference type="Allergome" id="9880">
    <property type="allergen name" value="Vig mu 28kD"/>
</dbReference>